<organism>
    <name type="scientific">Kosmotoga olearia (strain ATCC BAA-1733 / DSM 21960 / TBF 19.5.1)</name>
    <dbReference type="NCBI Taxonomy" id="521045"/>
    <lineage>
        <taxon>Bacteria</taxon>
        <taxon>Thermotogati</taxon>
        <taxon>Thermotogota</taxon>
        <taxon>Thermotogae</taxon>
        <taxon>Kosmotogales</taxon>
        <taxon>Kosmotogaceae</taxon>
        <taxon>Kosmotoga</taxon>
    </lineage>
</organism>
<protein>
    <recommendedName>
        <fullName evidence="1">6,7-dimethyl-8-ribityllumazine synthase</fullName>
        <shortName evidence="1">DMRL synthase</shortName>
        <shortName evidence="1">LS</shortName>
        <shortName evidence="1">Lumazine synthase</shortName>
        <ecNumber evidence="1">2.5.1.78</ecNumber>
    </recommendedName>
</protein>
<gene>
    <name evidence="1" type="primary">ribH</name>
    <name type="ordered locus">Kole_1234</name>
</gene>
<sequence>MRVFEGRYYGEGLKIAIVISRFNSAVTKELLDGALDALKRHEVKDENIDVIWVPGAMEIPHITRSIALKKKHDAIIALGAVIRGETYHFDVVANEVSKGIAAINLEVDVPVSFGIITSDTVEQALNRAGIKSGNKGFEAAMVALEMANLKRQIEAI</sequence>
<evidence type="ECO:0000255" key="1">
    <source>
        <dbReference type="HAMAP-Rule" id="MF_00178"/>
    </source>
</evidence>
<feature type="chain" id="PRO_1000203795" description="6,7-dimethyl-8-ribityllumazine synthase">
    <location>
        <begin position="1"/>
        <end position="156"/>
    </location>
</feature>
<feature type="active site" description="Proton donor" evidence="1">
    <location>
        <position position="88"/>
    </location>
</feature>
<feature type="binding site" evidence="1">
    <location>
        <position position="22"/>
    </location>
    <ligand>
        <name>5-amino-6-(D-ribitylamino)uracil</name>
        <dbReference type="ChEBI" id="CHEBI:15934"/>
    </ligand>
</feature>
<feature type="binding site" evidence="1">
    <location>
        <begin position="56"/>
        <end position="58"/>
    </location>
    <ligand>
        <name>5-amino-6-(D-ribitylamino)uracil</name>
        <dbReference type="ChEBI" id="CHEBI:15934"/>
    </ligand>
</feature>
<feature type="binding site" evidence="1">
    <location>
        <begin position="80"/>
        <end position="82"/>
    </location>
    <ligand>
        <name>5-amino-6-(D-ribitylamino)uracil</name>
        <dbReference type="ChEBI" id="CHEBI:15934"/>
    </ligand>
</feature>
<feature type="binding site" evidence="1">
    <location>
        <begin position="85"/>
        <end position="86"/>
    </location>
    <ligand>
        <name>(2S)-2-hydroxy-3-oxobutyl phosphate</name>
        <dbReference type="ChEBI" id="CHEBI:58830"/>
    </ligand>
</feature>
<feature type="binding site" evidence="1">
    <location>
        <position position="113"/>
    </location>
    <ligand>
        <name>5-amino-6-(D-ribitylamino)uracil</name>
        <dbReference type="ChEBI" id="CHEBI:15934"/>
    </ligand>
</feature>
<feature type="binding site" evidence="1">
    <location>
        <position position="127"/>
    </location>
    <ligand>
        <name>(2S)-2-hydroxy-3-oxobutyl phosphate</name>
        <dbReference type="ChEBI" id="CHEBI:58830"/>
    </ligand>
</feature>
<comment type="function">
    <text evidence="1">Catalyzes the formation of 6,7-dimethyl-8-ribityllumazine by condensation of 5-amino-6-(D-ribitylamino)uracil with 3,4-dihydroxy-2-butanone 4-phosphate. This is the penultimate step in the biosynthesis of riboflavin.</text>
</comment>
<comment type="catalytic activity">
    <reaction evidence="1">
        <text>(2S)-2-hydroxy-3-oxobutyl phosphate + 5-amino-6-(D-ribitylamino)uracil = 6,7-dimethyl-8-(1-D-ribityl)lumazine + phosphate + 2 H2O + H(+)</text>
        <dbReference type="Rhea" id="RHEA:26152"/>
        <dbReference type="ChEBI" id="CHEBI:15377"/>
        <dbReference type="ChEBI" id="CHEBI:15378"/>
        <dbReference type="ChEBI" id="CHEBI:15934"/>
        <dbReference type="ChEBI" id="CHEBI:43474"/>
        <dbReference type="ChEBI" id="CHEBI:58201"/>
        <dbReference type="ChEBI" id="CHEBI:58830"/>
        <dbReference type="EC" id="2.5.1.78"/>
    </reaction>
</comment>
<comment type="pathway">
    <text evidence="1">Cofactor biosynthesis; riboflavin biosynthesis; riboflavin from 2-hydroxy-3-oxobutyl phosphate and 5-amino-6-(D-ribitylamino)uracil: step 1/2.</text>
</comment>
<comment type="similarity">
    <text evidence="1">Belongs to the DMRL synthase family.</text>
</comment>
<name>RISB_KOSOT</name>
<keyword id="KW-1185">Reference proteome</keyword>
<keyword id="KW-0686">Riboflavin biosynthesis</keyword>
<keyword id="KW-0808">Transferase</keyword>
<proteinExistence type="inferred from homology"/>
<reference key="1">
    <citation type="submission" date="2009-06" db="EMBL/GenBank/DDBJ databases">
        <title>Complete sequence of Thermotogales bacterium TBF 19.5.1.</title>
        <authorList>
            <consortium name="US DOE Joint Genome Institute"/>
            <person name="Lucas S."/>
            <person name="Copeland A."/>
            <person name="Lapidus A."/>
            <person name="Glavina del Rio T."/>
            <person name="Tice H."/>
            <person name="Bruce D."/>
            <person name="Goodwin L."/>
            <person name="Pitluck S."/>
            <person name="Chertkov O."/>
            <person name="Brettin T."/>
            <person name="Detter J.C."/>
            <person name="Han C."/>
            <person name="Schmutz J."/>
            <person name="Larimer F."/>
            <person name="Land M."/>
            <person name="Hauser L."/>
            <person name="Kyrpides N."/>
            <person name="Ovchinnikova G."/>
            <person name="Noll K."/>
        </authorList>
    </citation>
    <scope>NUCLEOTIDE SEQUENCE [LARGE SCALE GENOMIC DNA]</scope>
    <source>
        <strain>ATCC BAA-1733 / DSM 21960 / TBF 19.5.1</strain>
    </source>
</reference>
<accession>C5CJ15</accession>
<dbReference type="EC" id="2.5.1.78" evidence="1"/>
<dbReference type="EMBL" id="CP001634">
    <property type="protein sequence ID" value="ACR79931.1"/>
    <property type="molecule type" value="Genomic_DNA"/>
</dbReference>
<dbReference type="RefSeq" id="WP_015868588.1">
    <property type="nucleotide sequence ID" value="NC_012785.1"/>
</dbReference>
<dbReference type="SMR" id="C5CJ15"/>
<dbReference type="STRING" id="521045.Kole_1234"/>
<dbReference type="KEGG" id="kol:Kole_1234"/>
<dbReference type="eggNOG" id="COG0054">
    <property type="taxonomic scope" value="Bacteria"/>
</dbReference>
<dbReference type="HOGENOM" id="CLU_089358_1_1_0"/>
<dbReference type="OrthoDB" id="9809709at2"/>
<dbReference type="UniPathway" id="UPA00275">
    <property type="reaction ID" value="UER00404"/>
</dbReference>
<dbReference type="Proteomes" id="UP000002382">
    <property type="component" value="Chromosome"/>
</dbReference>
<dbReference type="GO" id="GO:0005829">
    <property type="term" value="C:cytosol"/>
    <property type="evidence" value="ECO:0007669"/>
    <property type="project" value="TreeGrafter"/>
</dbReference>
<dbReference type="GO" id="GO:0009349">
    <property type="term" value="C:riboflavin synthase complex"/>
    <property type="evidence" value="ECO:0007669"/>
    <property type="project" value="InterPro"/>
</dbReference>
<dbReference type="GO" id="GO:0000906">
    <property type="term" value="F:6,7-dimethyl-8-ribityllumazine synthase activity"/>
    <property type="evidence" value="ECO:0007669"/>
    <property type="project" value="UniProtKB-UniRule"/>
</dbReference>
<dbReference type="GO" id="GO:0009231">
    <property type="term" value="P:riboflavin biosynthetic process"/>
    <property type="evidence" value="ECO:0007669"/>
    <property type="project" value="UniProtKB-UniRule"/>
</dbReference>
<dbReference type="CDD" id="cd09209">
    <property type="entry name" value="Lumazine_synthase-I"/>
    <property type="match status" value="1"/>
</dbReference>
<dbReference type="FunFam" id="3.40.50.960:FF:000001">
    <property type="entry name" value="6,7-dimethyl-8-ribityllumazine synthase"/>
    <property type="match status" value="1"/>
</dbReference>
<dbReference type="Gene3D" id="3.40.50.960">
    <property type="entry name" value="Lumazine/riboflavin synthase"/>
    <property type="match status" value="1"/>
</dbReference>
<dbReference type="HAMAP" id="MF_00178">
    <property type="entry name" value="Lumazine_synth"/>
    <property type="match status" value="1"/>
</dbReference>
<dbReference type="InterPro" id="IPR034964">
    <property type="entry name" value="LS"/>
</dbReference>
<dbReference type="InterPro" id="IPR002180">
    <property type="entry name" value="LS/RS"/>
</dbReference>
<dbReference type="InterPro" id="IPR036467">
    <property type="entry name" value="LS/RS_sf"/>
</dbReference>
<dbReference type="NCBIfam" id="TIGR00114">
    <property type="entry name" value="lumazine-synth"/>
    <property type="match status" value="1"/>
</dbReference>
<dbReference type="NCBIfam" id="NF000812">
    <property type="entry name" value="PRK00061.1-4"/>
    <property type="match status" value="1"/>
</dbReference>
<dbReference type="PANTHER" id="PTHR21058:SF0">
    <property type="entry name" value="6,7-DIMETHYL-8-RIBITYLLUMAZINE SYNTHASE"/>
    <property type="match status" value="1"/>
</dbReference>
<dbReference type="PANTHER" id="PTHR21058">
    <property type="entry name" value="6,7-DIMETHYL-8-RIBITYLLUMAZINE SYNTHASE DMRL SYNTHASE LUMAZINE SYNTHASE"/>
    <property type="match status" value="1"/>
</dbReference>
<dbReference type="Pfam" id="PF00885">
    <property type="entry name" value="DMRL_synthase"/>
    <property type="match status" value="1"/>
</dbReference>
<dbReference type="SUPFAM" id="SSF52121">
    <property type="entry name" value="Lumazine synthase"/>
    <property type="match status" value="1"/>
</dbReference>